<comment type="function">
    <text evidence="1">Catalyzes the decarboxylation of orotidine 5'-monophosphate (OMP) to uridine 5'-monophosphate (UMP).</text>
</comment>
<comment type="catalytic activity">
    <reaction evidence="1">
        <text>orotidine 5'-phosphate + H(+) = UMP + CO2</text>
        <dbReference type="Rhea" id="RHEA:11596"/>
        <dbReference type="ChEBI" id="CHEBI:15378"/>
        <dbReference type="ChEBI" id="CHEBI:16526"/>
        <dbReference type="ChEBI" id="CHEBI:57538"/>
        <dbReference type="ChEBI" id="CHEBI:57865"/>
        <dbReference type="EC" id="4.1.1.23"/>
    </reaction>
</comment>
<comment type="pathway">
    <text evidence="1">Pyrimidine metabolism; UMP biosynthesis via de novo pathway; UMP from orotate: step 2/2.</text>
</comment>
<comment type="subunit">
    <text evidence="1">Homodimer.</text>
</comment>
<comment type="similarity">
    <text evidence="1">Belongs to the OMP decarboxylase family. Type 1 subfamily.</text>
</comment>
<organism>
    <name type="scientific">Parasynechococcus marenigrum (strain WH8102)</name>
    <dbReference type="NCBI Taxonomy" id="84588"/>
    <lineage>
        <taxon>Bacteria</taxon>
        <taxon>Bacillati</taxon>
        <taxon>Cyanobacteriota</taxon>
        <taxon>Cyanophyceae</taxon>
        <taxon>Synechococcales</taxon>
        <taxon>Prochlorococcaceae</taxon>
        <taxon>Parasynechococcus</taxon>
        <taxon>Parasynechococcus marenigrum</taxon>
    </lineage>
</organism>
<protein>
    <recommendedName>
        <fullName evidence="1">Orotidine 5'-phosphate decarboxylase</fullName>
        <ecNumber evidence="1">4.1.1.23</ecNumber>
    </recommendedName>
    <alternativeName>
        <fullName evidence="1">OMP decarboxylase</fullName>
        <shortName evidence="1">OMPDCase</shortName>
        <shortName evidence="1">OMPdecase</shortName>
    </alternativeName>
</protein>
<name>PYRF_PARMW</name>
<feature type="chain" id="PRO_0000134593" description="Orotidine 5'-phosphate decarboxylase">
    <location>
        <begin position="1"/>
        <end position="246"/>
    </location>
</feature>
<feature type="active site" description="Proton donor" evidence="1">
    <location>
        <position position="68"/>
    </location>
</feature>
<feature type="binding site" evidence="1">
    <location>
        <position position="18"/>
    </location>
    <ligand>
        <name>substrate</name>
    </ligand>
</feature>
<feature type="binding site" evidence="1">
    <location>
        <position position="39"/>
    </location>
    <ligand>
        <name>substrate</name>
    </ligand>
</feature>
<feature type="binding site" evidence="1">
    <location>
        <begin position="66"/>
        <end position="75"/>
    </location>
    <ligand>
        <name>substrate</name>
    </ligand>
</feature>
<feature type="binding site" evidence="1">
    <location>
        <position position="130"/>
    </location>
    <ligand>
        <name>substrate</name>
    </ligand>
</feature>
<feature type="binding site" evidence="1">
    <location>
        <position position="192"/>
    </location>
    <ligand>
        <name>substrate</name>
    </ligand>
</feature>
<feature type="binding site" evidence="1">
    <location>
        <position position="201"/>
    </location>
    <ligand>
        <name>substrate</name>
    </ligand>
</feature>
<feature type="binding site" evidence="1">
    <location>
        <position position="221"/>
    </location>
    <ligand>
        <name>substrate</name>
    </ligand>
</feature>
<feature type="binding site" evidence="1">
    <location>
        <position position="222"/>
    </location>
    <ligand>
        <name>substrate</name>
    </ligand>
</feature>
<gene>
    <name evidence="1" type="primary">pyrF</name>
    <name type="ordered locus">SYNW0571</name>
</gene>
<reference key="1">
    <citation type="journal article" date="2003" name="Nature">
        <title>The genome of a motile marine Synechococcus.</title>
        <authorList>
            <person name="Palenik B."/>
            <person name="Brahamsha B."/>
            <person name="Larimer F.W."/>
            <person name="Land M.L."/>
            <person name="Hauser L."/>
            <person name="Chain P."/>
            <person name="Lamerdin J.E."/>
            <person name="Regala W."/>
            <person name="Allen E.E."/>
            <person name="McCarren J."/>
            <person name="Paulsen I.T."/>
            <person name="Dufresne A."/>
            <person name="Partensky F."/>
            <person name="Webb E.A."/>
            <person name="Waterbury J."/>
        </authorList>
    </citation>
    <scope>NUCLEOTIDE SEQUENCE [LARGE SCALE GENOMIC DNA]</scope>
    <source>
        <strain>WH8102</strain>
    </source>
</reference>
<dbReference type="EC" id="4.1.1.23" evidence="1"/>
<dbReference type="EMBL" id="BX569690">
    <property type="protein sequence ID" value="CAE07086.1"/>
    <property type="molecule type" value="Genomic_DNA"/>
</dbReference>
<dbReference type="RefSeq" id="WP_011127440.1">
    <property type="nucleotide sequence ID" value="NC_005070.1"/>
</dbReference>
<dbReference type="SMR" id="Q7U8P3"/>
<dbReference type="STRING" id="84588.SYNW0571"/>
<dbReference type="KEGG" id="syw:SYNW0571"/>
<dbReference type="eggNOG" id="COG0284">
    <property type="taxonomic scope" value="Bacteria"/>
</dbReference>
<dbReference type="HOGENOM" id="CLU_067069_1_0_3"/>
<dbReference type="UniPathway" id="UPA00070">
    <property type="reaction ID" value="UER00120"/>
</dbReference>
<dbReference type="Proteomes" id="UP000001422">
    <property type="component" value="Chromosome"/>
</dbReference>
<dbReference type="GO" id="GO:0005829">
    <property type="term" value="C:cytosol"/>
    <property type="evidence" value="ECO:0007669"/>
    <property type="project" value="TreeGrafter"/>
</dbReference>
<dbReference type="GO" id="GO:0004590">
    <property type="term" value="F:orotidine-5'-phosphate decarboxylase activity"/>
    <property type="evidence" value="ECO:0007669"/>
    <property type="project" value="UniProtKB-UniRule"/>
</dbReference>
<dbReference type="GO" id="GO:0006207">
    <property type="term" value="P:'de novo' pyrimidine nucleobase biosynthetic process"/>
    <property type="evidence" value="ECO:0007669"/>
    <property type="project" value="InterPro"/>
</dbReference>
<dbReference type="GO" id="GO:0044205">
    <property type="term" value="P:'de novo' UMP biosynthetic process"/>
    <property type="evidence" value="ECO:0007669"/>
    <property type="project" value="UniProtKB-UniRule"/>
</dbReference>
<dbReference type="CDD" id="cd04725">
    <property type="entry name" value="OMP_decarboxylase_like"/>
    <property type="match status" value="1"/>
</dbReference>
<dbReference type="FunFam" id="3.20.20.70:FF:000015">
    <property type="entry name" value="Orotidine 5'-phosphate decarboxylase"/>
    <property type="match status" value="1"/>
</dbReference>
<dbReference type="Gene3D" id="3.20.20.70">
    <property type="entry name" value="Aldolase class I"/>
    <property type="match status" value="1"/>
</dbReference>
<dbReference type="HAMAP" id="MF_01200_B">
    <property type="entry name" value="OMPdecase_type1_B"/>
    <property type="match status" value="1"/>
</dbReference>
<dbReference type="InterPro" id="IPR013785">
    <property type="entry name" value="Aldolase_TIM"/>
</dbReference>
<dbReference type="InterPro" id="IPR014732">
    <property type="entry name" value="OMPdecase"/>
</dbReference>
<dbReference type="InterPro" id="IPR018089">
    <property type="entry name" value="OMPdecase_AS"/>
</dbReference>
<dbReference type="InterPro" id="IPR047596">
    <property type="entry name" value="OMPdecase_bac"/>
</dbReference>
<dbReference type="InterPro" id="IPR001754">
    <property type="entry name" value="OMPdeCOase_dom"/>
</dbReference>
<dbReference type="InterPro" id="IPR011060">
    <property type="entry name" value="RibuloseP-bd_barrel"/>
</dbReference>
<dbReference type="NCBIfam" id="NF001273">
    <property type="entry name" value="PRK00230.1"/>
    <property type="match status" value="1"/>
</dbReference>
<dbReference type="NCBIfam" id="TIGR01740">
    <property type="entry name" value="pyrF"/>
    <property type="match status" value="1"/>
</dbReference>
<dbReference type="PANTHER" id="PTHR32119">
    <property type="entry name" value="OROTIDINE 5'-PHOSPHATE DECARBOXYLASE"/>
    <property type="match status" value="1"/>
</dbReference>
<dbReference type="PANTHER" id="PTHR32119:SF2">
    <property type="entry name" value="OROTIDINE 5'-PHOSPHATE DECARBOXYLASE"/>
    <property type="match status" value="1"/>
</dbReference>
<dbReference type="Pfam" id="PF00215">
    <property type="entry name" value="OMPdecase"/>
    <property type="match status" value="1"/>
</dbReference>
<dbReference type="SMART" id="SM00934">
    <property type="entry name" value="OMPdecase"/>
    <property type="match status" value="1"/>
</dbReference>
<dbReference type="SUPFAM" id="SSF51366">
    <property type="entry name" value="Ribulose-phoshate binding barrel"/>
    <property type="match status" value="1"/>
</dbReference>
<dbReference type="PROSITE" id="PS00156">
    <property type="entry name" value="OMPDECASE"/>
    <property type="match status" value="1"/>
</dbReference>
<sequence length="246" mass="25234">MAPSLASGPADRIIVALDGMAPEQALRFAAQLDGLRWVKVGLELFVQAGPEVVAQLREQGLRVFLDLKFHDIPATMAGACRRAAALGAELITVHACAGSEALKAAQAAAVEGAQQAGLNPPTLLAVTVLTSWEEQRLQRELAIQQSIGERVPALAQLSATAGIGGCVCSPLEAAALRAQHPEPFALVTPGIRPKGSAVGDQARVMGPAEAIAAGASQLVIGRPITKADDPSAAFAACCTQLLGSID</sequence>
<keyword id="KW-0210">Decarboxylase</keyword>
<keyword id="KW-0456">Lyase</keyword>
<keyword id="KW-0665">Pyrimidine biosynthesis</keyword>
<accession>Q7U8P3</accession>
<evidence type="ECO:0000255" key="1">
    <source>
        <dbReference type="HAMAP-Rule" id="MF_01200"/>
    </source>
</evidence>
<proteinExistence type="inferred from homology"/>